<organismHost>
    <name type="scientific">Elephas maximus</name>
    <name type="common">Indian elephant</name>
    <dbReference type="NCBI Taxonomy" id="9783"/>
</organismHost>
<organismHost>
    <name type="scientific">Loxodonta africana</name>
    <name type="common">African elephant</name>
    <dbReference type="NCBI Taxonomy" id="9785"/>
</organismHost>
<organismHost>
    <name type="scientific">Loxodonta cyclotis</name>
    <name type="common">African forest elephant</name>
    <dbReference type="NCBI Taxonomy" id="99490"/>
</organismHost>
<dbReference type="EMBL" id="AF322977">
    <property type="protein sequence ID" value="AAG41997.2"/>
    <property type="molecule type" value="Genomic_DNA"/>
</dbReference>
<dbReference type="SMR" id="Q9DKU0"/>
<dbReference type="GO" id="GO:0042025">
    <property type="term" value="C:host cell nucleus"/>
    <property type="evidence" value="ECO:0007669"/>
    <property type="project" value="UniProtKB-SubCell"/>
</dbReference>
<dbReference type="GO" id="GO:0005524">
    <property type="term" value="F:ATP binding"/>
    <property type="evidence" value="ECO:0007669"/>
    <property type="project" value="UniProtKB-KW"/>
</dbReference>
<dbReference type="GO" id="GO:0008270">
    <property type="term" value="F:zinc ion binding"/>
    <property type="evidence" value="ECO:0007669"/>
    <property type="project" value="UniProtKB-KW"/>
</dbReference>
<dbReference type="GO" id="GO:0019073">
    <property type="term" value="P:viral DNA genome packaging"/>
    <property type="evidence" value="ECO:0007669"/>
    <property type="project" value="InterPro"/>
</dbReference>
<dbReference type="HAMAP" id="MF_04014">
    <property type="entry name" value="HSV_TRM1"/>
    <property type="match status" value="1"/>
</dbReference>
<dbReference type="InterPro" id="IPR000501">
    <property type="entry name" value="UL28/UL56"/>
</dbReference>
<dbReference type="Pfam" id="PF01366">
    <property type="entry name" value="PRTP"/>
    <property type="match status" value="1"/>
</dbReference>
<feature type="chain" id="PRO_0000408161" description="Tripartite terminase subunit 1">
    <location>
        <begin position="1"/>
        <end position="692"/>
    </location>
</feature>
<feature type="zinc finger region" description="C3H1-type" evidence="1">
    <location>
        <begin position="190"/>
        <end position="218"/>
    </location>
</feature>
<feature type="binding site" evidence="1">
    <location>
        <begin position="634"/>
        <end position="641"/>
    </location>
    <ligand>
        <name>ATP</name>
        <dbReference type="ChEBI" id="CHEBI:30616"/>
    </ligand>
</feature>
<accession>Q9DKU0</accession>
<proteinExistence type="inferred from homology"/>
<sequence>MNKLQLLGVVFAKVNECSLELSCVRYCDPNLLLTKRKEFLHNAFVCKYLCDSLLSELQHFSCTNGLTACKHLAIILENLCEHFYVINKALCSFEIHKDHQQYYRTLFDVDQCSLHDPIKISFVNKQDLEITLTDFNEIERFLCKLNLIFPLIDARSGMRIISQIYDRLRKFTGISPLARLEFYKSACGGCYLCYEELQMTPNNGSSVQKRLNGVLCEHVTYTKDLVFQENEYLEVLREDLKRDNLLREDMRTELDDMKKILSNKKERGFYVPEAEQLLHRYDVFTDDIPNYIYTLSDLTYWSKTSEKIIKTMNMTMQQLNVYNNNMIKLKRSISRALNDIEVRDCFDVFEKVVDKRHCMFLGSMFTSSAKIISLLATQCLTAFEEKAVFERLNECDALCSTVNTILERLKSASGDGKEGITKQDFQADELIKGYNVSDEVSVRKKTYLNKVADKGYSKIVASLSTEERSIKKLIDINFLGTLCIDMMVKLEKMFYKRSQIGQMVENGVHLLALCNYDNHLYIRNNLSRQSISTENVNGVIQHILSFLCGPIFTHRHDIFPMPPNIDMAYACDNANVLPHRKEELMQCVNDITSVHGWSISSYNTFFKIDSVDLNTAHAHVWGYVKEFIVAVTLYNELYGQRLRAFRVDENTIRECGLYLTYNSDIPLVLKTDKNVIYGSDIYSILYAHMHHA</sequence>
<comment type="function">
    <text evidence="1">Component of the molecular motor that translocates viral genomic DNA in empty capsid during DNA packaging. Forms a tripartite terminase complex together with TRM2 and TRM3 in the host cytoplasm. Once the complex reaches the host nucleus, it interacts with the capsid portal vertex. This portal forms a ring in which genomic DNA is translocated into the capsid. TRM1 carries an endonuclease activity that plays an important role for the cleavage of concatemeric viral DNA into unit length genomes.</text>
</comment>
<comment type="subunit">
    <text evidence="1">Associates with TRM2 and TRM3 to form the tripartite terminase complex. Interacts with portal protein.</text>
</comment>
<comment type="subcellular location">
    <subcellularLocation>
        <location evidence="1">Host nucleus</location>
    </subcellularLocation>
    <text evidence="1">Found associated with the external surface of the viral capsid during assembly and DNA packaging, but seems absent in extracellular mature virions.</text>
</comment>
<comment type="similarity">
    <text evidence="1">Belongs to the herpesviridae TRM1 protein family.</text>
</comment>
<keyword id="KW-0067">ATP-binding</keyword>
<keyword id="KW-1048">Host nucleus</keyword>
<keyword id="KW-0426">Late protein</keyword>
<keyword id="KW-0479">Metal-binding</keyword>
<keyword id="KW-0547">Nucleotide-binding</keyword>
<keyword id="KW-0231">Viral genome packaging</keyword>
<keyword id="KW-1188">Viral release from host cell</keyword>
<keyword id="KW-0862">Zinc</keyword>
<keyword id="KW-0863">Zinc-finger</keyword>
<reference key="1">
    <citation type="journal article" date="2007" name="J. Virol.">
        <title>Identification of novel rodent herpesviruses, including the first gammaherpesvirus of Mus musculus.</title>
        <authorList>
            <person name="Ehlers B."/>
            <person name="Kuchler J."/>
            <person name="Yasmum N."/>
            <person name="Dural G."/>
            <person name="Voigt S."/>
            <person name="Schmidt-Chanasit J."/>
            <person name="Jakel T."/>
            <person name="Matuschka F.R."/>
            <person name="Richter D."/>
            <person name="Essbauer S."/>
            <person name="Hughes D.J."/>
            <person name="Summers C."/>
            <person name="Bennett M."/>
            <person name="Stewart J.P."/>
            <person name="Ulrich R.G."/>
        </authorList>
    </citation>
    <scope>NUCLEOTIDE SEQUENCE [GENOMIC DNA]</scope>
</reference>
<reference key="2">
    <citation type="journal article" date="2001" name="J. Gen. Virol.">
        <title>Genetic and ultrastructural characterization of a European isolate of the fatal endotheliotropic elephant herpesvirus.</title>
        <authorList>
            <person name="Ehlers B."/>
            <person name="Burkhardt S."/>
            <person name="Goltz M."/>
            <person name="Bergmann V."/>
            <person name="Ochs A."/>
            <person name="Weiler H."/>
            <person name="Hentschke J."/>
        </authorList>
    </citation>
    <scope>NUCLEOTIDE SEQUENCE [GENOMIC DNA]</scope>
</reference>
<organism>
    <name type="scientific">Elephantid herpesvirus 1 (isolate Asian elephant/Berlin/Kiba/1998)</name>
    <name type="common">EIHV-1</name>
    <name type="synonym">Elephant endotheliotropic herpesvirus</name>
    <dbReference type="NCBI Taxonomy" id="654902"/>
    <lineage>
        <taxon>Viruses</taxon>
        <taxon>Duplodnaviria</taxon>
        <taxon>Heunggongvirae</taxon>
        <taxon>Peploviricota</taxon>
        <taxon>Herviviricetes</taxon>
        <taxon>Herpesvirales</taxon>
        <taxon>Orthoherpesviridae</taxon>
        <taxon>Betaherpesvirinae</taxon>
        <taxon>Proboscivirus</taxon>
        <taxon>Proboscivirus elephantidbeta1</taxon>
        <taxon>Elephantid herpesvirus 1</taxon>
    </lineage>
</organism>
<protein>
    <recommendedName>
        <fullName evidence="1">Tripartite terminase subunit 1</fullName>
    </recommendedName>
</protein>
<gene>
    <name evidence="1" type="primary">TRM1</name>
</gene>
<name>TRM1_ELHVK</name>
<evidence type="ECO:0000255" key="1">
    <source>
        <dbReference type="HAMAP-Rule" id="MF_04014"/>
    </source>
</evidence>